<protein>
    <recommendedName>
        <fullName evidence="1">Fe-S cluster assembly protein dre2</fullName>
    </recommendedName>
    <alternativeName>
        <fullName evidence="1">Anamorsin homolog</fullName>
    </alternativeName>
</protein>
<gene>
    <name evidence="1" type="primary">dre2</name>
    <name type="ORF">SPBC337.10c</name>
</gene>
<organism>
    <name type="scientific">Schizosaccharomyces pombe (strain 972 / ATCC 24843)</name>
    <name type="common">Fission yeast</name>
    <dbReference type="NCBI Taxonomy" id="284812"/>
    <lineage>
        <taxon>Eukaryota</taxon>
        <taxon>Fungi</taxon>
        <taxon>Dikarya</taxon>
        <taxon>Ascomycota</taxon>
        <taxon>Taphrinomycotina</taxon>
        <taxon>Schizosaccharomycetes</taxon>
        <taxon>Schizosaccharomycetales</taxon>
        <taxon>Schizosaccharomycetaceae</taxon>
        <taxon>Schizosaccharomyces</taxon>
    </lineage>
</organism>
<evidence type="ECO:0000255" key="1">
    <source>
        <dbReference type="HAMAP-Rule" id="MF_03115"/>
    </source>
</evidence>
<evidence type="ECO:0000269" key="2">
    <source>
    </source>
</evidence>
<name>DRE2_SCHPO</name>
<dbReference type="EMBL" id="CU329671">
    <property type="protein sequence ID" value="CAA21280.1"/>
    <property type="molecule type" value="Genomic_DNA"/>
</dbReference>
<dbReference type="PIR" id="T40263">
    <property type="entry name" value="T40263"/>
</dbReference>
<dbReference type="RefSeq" id="NP_595411.1">
    <property type="nucleotide sequence ID" value="NM_001021318.2"/>
</dbReference>
<dbReference type="BioGRID" id="277437">
    <property type="interactions" value="3"/>
</dbReference>
<dbReference type="FunCoup" id="O74821">
    <property type="interactions" value="486"/>
</dbReference>
<dbReference type="STRING" id="284812.O74821"/>
<dbReference type="iPTMnet" id="O74821"/>
<dbReference type="PaxDb" id="4896-SPBC337.10c.1"/>
<dbReference type="EnsemblFungi" id="SPBC337.10c.1">
    <property type="protein sequence ID" value="SPBC337.10c.1:pep"/>
    <property type="gene ID" value="SPBC337.10c"/>
</dbReference>
<dbReference type="GeneID" id="2540921"/>
<dbReference type="KEGG" id="spo:2540921"/>
<dbReference type="PomBase" id="SPBC337.10c">
    <property type="gene designation" value="dre2"/>
</dbReference>
<dbReference type="VEuPathDB" id="FungiDB:SPBC337.10c"/>
<dbReference type="eggNOG" id="KOG4020">
    <property type="taxonomic scope" value="Eukaryota"/>
</dbReference>
<dbReference type="HOGENOM" id="CLU_067152_1_0_1"/>
<dbReference type="InParanoid" id="O74821"/>
<dbReference type="OMA" id="DFVMPVT"/>
<dbReference type="PhylomeDB" id="O74821"/>
<dbReference type="PRO" id="PR:O74821"/>
<dbReference type="Proteomes" id="UP000002485">
    <property type="component" value="Chromosome II"/>
</dbReference>
<dbReference type="GO" id="GO:0005737">
    <property type="term" value="C:cytoplasm"/>
    <property type="evidence" value="ECO:0000318"/>
    <property type="project" value="GO_Central"/>
</dbReference>
<dbReference type="GO" id="GO:0005829">
    <property type="term" value="C:cytosol"/>
    <property type="evidence" value="ECO:0007005"/>
    <property type="project" value="PomBase"/>
</dbReference>
<dbReference type="GO" id="GO:0005758">
    <property type="term" value="C:mitochondrial intermembrane space"/>
    <property type="evidence" value="ECO:0000266"/>
    <property type="project" value="PomBase"/>
</dbReference>
<dbReference type="GO" id="GO:0005634">
    <property type="term" value="C:nucleus"/>
    <property type="evidence" value="ECO:0007005"/>
    <property type="project" value="PomBase"/>
</dbReference>
<dbReference type="GO" id="GO:0051537">
    <property type="term" value="F:2 iron, 2 sulfur cluster binding"/>
    <property type="evidence" value="ECO:0007669"/>
    <property type="project" value="UniProtKB-UniRule"/>
</dbReference>
<dbReference type="GO" id="GO:0051539">
    <property type="term" value="F:4 iron, 4 sulfur cluster binding"/>
    <property type="evidence" value="ECO:0007669"/>
    <property type="project" value="UniProtKB-KW"/>
</dbReference>
<dbReference type="GO" id="GO:0009055">
    <property type="term" value="F:electron transfer activity"/>
    <property type="evidence" value="ECO:0000266"/>
    <property type="project" value="PomBase"/>
</dbReference>
<dbReference type="GO" id="GO:0046872">
    <property type="term" value="F:metal ion binding"/>
    <property type="evidence" value="ECO:0007669"/>
    <property type="project" value="UniProtKB-KW"/>
</dbReference>
<dbReference type="GO" id="GO:0044572">
    <property type="term" value="P:[4Fe-4S] cluster assembly"/>
    <property type="evidence" value="ECO:0000266"/>
    <property type="project" value="PomBase"/>
</dbReference>
<dbReference type="GO" id="GO:0016226">
    <property type="term" value="P:iron-sulfur cluster assembly"/>
    <property type="evidence" value="ECO:0000318"/>
    <property type="project" value="GO_Central"/>
</dbReference>
<dbReference type="HAMAP" id="MF_03115">
    <property type="entry name" value="Anamorsin"/>
    <property type="match status" value="1"/>
</dbReference>
<dbReference type="InterPro" id="IPR007785">
    <property type="entry name" value="Anamorsin"/>
</dbReference>
<dbReference type="InterPro" id="IPR046408">
    <property type="entry name" value="CIAPIN1"/>
</dbReference>
<dbReference type="InterPro" id="IPR031838">
    <property type="entry name" value="Dre2_N"/>
</dbReference>
<dbReference type="PANTHER" id="PTHR13273">
    <property type="entry name" value="ANAMORSIN"/>
    <property type="match status" value="1"/>
</dbReference>
<dbReference type="PANTHER" id="PTHR13273:SF14">
    <property type="entry name" value="ANAMORSIN"/>
    <property type="match status" value="1"/>
</dbReference>
<dbReference type="Pfam" id="PF05093">
    <property type="entry name" value="CIAPIN1"/>
    <property type="match status" value="1"/>
</dbReference>
<dbReference type="Pfam" id="PF16803">
    <property type="entry name" value="DRE2_N"/>
    <property type="match status" value="1"/>
</dbReference>
<comment type="function">
    <text evidence="1">Component of the cytosolic iron-sulfur (Fe-S) protein assembly (CIA) machinery required for the maturation of extramitochondrial Fe-S proteins. Part of an electron transfer chain functioning in an early step of cytosolic Fe-S biogenesis, facilitating the de novo assembly of a [4Fe-4S] cluster on the scaffold complex cfd1-nbp35. Electrons are transferred to dre2 from NADPH via the FAD- and FMN-containing protein tah18. Tah18-dre2 are also required for the assembly of the diferric tyrosyl radical cofactor of ribonucleotide reductase (RNR), probably by providing electrons for reduction during radical cofactor maturation in the catalytic small subunit suc22.</text>
</comment>
<comment type="cofactor">
    <cofactor evidence="1">
        <name>[2Fe-2S] cluster</name>
        <dbReference type="ChEBI" id="CHEBI:190135"/>
    </cofactor>
</comment>
<comment type="cofactor">
    <cofactor evidence="1">
        <name>[4Fe-4S] cluster</name>
        <dbReference type="ChEBI" id="CHEBI:49883"/>
    </cofactor>
</comment>
<comment type="subunit">
    <text evidence="1">Monomer. Interacts with tah18. Interacts with tim40.</text>
</comment>
<comment type="subcellular location">
    <subcellularLocation>
        <location evidence="1 2">Cytoplasm</location>
    </subcellularLocation>
    <subcellularLocation>
        <location evidence="1">Mitochondrion intermembrane space</location>
    </subcellularLocation>
</comment>
<comment type="domain">
    <text evidence="1">The C-terminal domain binds 2 Fe-S clusters but is otherwise mostly in an intrinsically disordered conformation.</text>
</comment>
<comment type="domain">
    <text evidence="1">The N-terminal domain has structural similarity with S-adenosyl-L-methionine-dependent methyltransferases, but does not bind S-adenosyl-L-methionine. It is required for correct assembly of the 2 Fe-S clusters.</text>
</comment>
<comment type="domain">
    <text evidence="1">The twin Cx2C motifs are involved in the recognition by the mitochondrial tim40-erv1 disulfide relay system. The formation of 2 disulfide bonds in the Cx2C motifs through dithiol/disulfide exchange reactions effectively traps the protein in the mitochondrial intermembrane space.</text>
</comment>
<comment type="similarity">
    <text evidence="1">Belongs to the anamorsin family.</text>
</comment>
<sequence>MSSSVLVLTSPGFASKEESLKKVFDLIDNGASRELQMIDRVQSQLVNLPINRYDSVIAAIDDGAWSSTLGPILSQAFASVHPGGTLRVYSTADEADESFEMTALLSGWLIESKSPWILSRPNQVEAVPIKLSNKNGQSASKNKILDFLKSDKENLISGDDDQELIDEDELLDESAHDNVLKVPECKPEPGKKKRACKNCTCGLREMEEHESSKTSAQLEAVKLTDTTEVDFTEKLKSKNAVSSCGNCYLGDAFRCSGCPYIGMPAFNPGDTVILAENRDKMSWMADDI</sequence>
<reference key="1">
    <citation type="journal article" date="2002" name="Nature">
        <title>The genome sequence of Schizosaccharomyces pombe.</title>
        <authorList>
            <person name="Wood V."/>
            <person name="Gwilliam R."/>
            <person name="Rajandream M.A."/>
            <person name="Lyne M.H."/>
            <person name="Lyne R."/>
            <person name="Stewart A."/>
            <person name="Sgouros J.G."/>
            <person name="Peat N."/>
            <person name="Hayles J."/>
            <person name="Baker S.G."/>
            <person name="Basham D."/>
            <person name="Bowman S."/>
            <person name="Brooks K."/>
            <person name="Brown D."/>
            <person name="Brown S."/>
            <person name="Chillingworth T."/>
            <person name="Churcher C.M."/>
            <person name="Collins M."/>
            <person name="Connor R."/>
            <person name="Cronin A."/>
            <person name="Davis P."/>
            <person name="Feltwell T."/>
            <person name="Fraser A."/>
            <person name="Gentles S."/>
            <person name="Goble A."/>
            <person name="Hamlin N."/>
            <person name="Harris D.E."/>
            <person name="Hidalgo J."/>
            <person name="Hodgson G."/>
            <person name="Holroyd S."/>
            <person name="Hornsby T."/>
            <person name="Howarth S."/>
            <person name="Huckle E.J."/>
            <person name="Hunt S."/>
            <person name="Jagels K."/>
            <person name="James K.D."/>
            <person name="Jones L."/>
            <person name="Jones M."/>
            <person name="Leather S."/>
            <person name="McDonald S."/>
            <person name="McLean J."/>
            <person name="Mooney P."/>
            <person name="Moule S."/>
            <person name="Mungall K.L."/>
            <person name="Murphy L.D."/>
            <person name="Niblett D."/>
            <person name="Odell C."/>
            <person name="Oliver K."/>
            <person name="O'Neil S."/>
            <person name="Pearson D."/>
            <person name="Quail M.A."/>
            <person name="Rabbinowitsch E."/>
            <person name="Rutherford K.M."/>
            <person name="Rutter S."/>
            <person name="Saunders D."/>
            <person name="Seeger K."/>
            <person name="Sharp S."/>
            <person name="Skelton J."/>
            <person name="Simmonds M.N."/>
            <person name="Squares R."/>
            <person name="Squares S."/>
            <person name="Stevens K."/>
            <person name="Taylor K."/>
            <person name="Taylor R.G."/>
            <person name="Tivey A."/>
            <person name="Walsh S.V."/>
            <person name="Warren T."/>
            <person name="Whitehead S."/>
            <person name="Woodward J.R."/>
            <person name="Volckaert G."/>
            <person name="Aert R."/>
            <person name="Robben J."/>
            <person name="Grymonprez B."/>
            <person name="Weltjens I."/>
            <person name="Vanstreels E."/>
            <person name="Rieger M."/>
            <person name="Schaefer M."/>
            <person name="Mueller-Auer S."/>
            <person name="Gabel C."/>
            <person name="Fuchs M."/>
            <person name="Duesterhoeft A."/>
            <person name="Fritzc C."/>
            <person name="Holzer E."/>
            <person name="Moestl D."/>
            <person name="Hilbert H."/>
            <person name="Borzym K."/>
            <person name="Langer I."/>
            <person name="Beck A."/>
            <person name="Lehrach H."/>
            <person name="Reinhardt R."/>
            <person name="Pohl T.M."/>
            <person name="Eger P."/>
            <person name="Zimmermann W."/>
            <person name="Wedler H."/>
            <person name="Wambutt R."/>
            <person name="Purnelle B."/>
            <person name="Goffeau A."/>
            <person name="Cadieu E."/>
            <person name="Dreano S."/>
            <person name="Gloux S."/>
            <person name="Lelaure V."/>
            <person name="Mottier S."/>
            <person name="Galibert F."/>
            <person name="Aves S.J."/>
            <person name="Xiang Z."/>
            <person name="Hunt C."/>
            <person name="Moore K."/>
            <person name="Hurst S.M."/>
            <person name="Lucas M."/>
            <person name="Rochet M."/>
            <person name="Gaillardin C."/>
            <person name="Tallada V.A."/>
            <person name="Garzon A."/>
            <person name="Thode G."/>
            <person name="Daga R.R."/>
            <person name="Cruzado L."/>
            <person name="Jimenez J."/>
            <person name="Sanchez M."/>
            <person name="del Rey F."/>
            <person name="Benito J."/>
            <person name="Dominguez A."/>
            <person name="Revuelta J.L."/>
            <person name="Moreno S."/>
            <person name="Armstrong J."/>
            <person name="Forsburg S.L."/>
            <person name="Cerutti L."/>
            <person name="Lowe T."/>
            <person name="McCombie W.R."/>
            <person name="Paulsen I."/>
            <person name="Potashkin J."/>
            <person name="Shpakovski G.V."/>
            <person name="Ussery D."/>
            <person name="Barrell B.G."/>
            <person name="Nurse P."/>
        </authorList>
    </citation>
    <scope>NUCLEOTIDE SEQUENCE [LARGE SCALE GENOMIC DNA]</scope>
    <source>
        <strain>972 / ATCC 24843</strain>
    </source>
</reference>
<reference key="2">
    <citation type="journal article" date="2006" name="Nat. Biotechnol.">
        <title>ORFeome cloning and global analysis of protein localization in the fission yeast Schizosaccharomyces pombe.</title>
        <authorList>
            <person name="Matsuyama A."/>
            <person name="Arai R."/>
            <person name="Yashiroda Y."/>
            <person name="Shirai A."/>
            <person name="Kamata A."/>
            <person name="Sekido S."/>
            <person name="Kobayashi Y."/>
            <person name="Hashimoto A."/>
            <person name="Hamamoto M."/>
            <person name="Hiraoka Y."/>
            <person name="Horinouchi S."/>
            <person name="Yoshida M."/>
        </authorList>
    </citation>
    <scope>SUBCELLULAR LOCATION [LARGE SCALE ANALYSIS]</scope>
</reference>
<proteinExistence type="inferred from homology"/>
<accession>O74821</accession>
<keyword id="KW-0001">2Fe-2S</keyword>
<keyword id="KW-0004">4Fe-4S</keyword>
<keyword id="KW-0963">Cytoplasm</keyword>
<keyword id="KW-0408">Iron</keyword>
<keyword id="KW-0411">Iron-sulfur</keyword>
<keyword id="KW-0479">Metal-binding</keyword>
<keyword id="KW-0496">Mitochondrion</keyword>
<keyword id="KW-1185">Reference proteome</keyword>
<feature type="chain" id="PRO_0000324871" description="Fe-S cluster assembly protein dre2">
    <location>
        <begin position="1"/>
        <end position="288"/>
    </location>
</feature>
<feature type="region of interest" description="N-terminal SAM-like domain" evidence="1">
    <location>
        <begin position="1"/>
        <end position="127"/>
    </location>
</feature>
<feature type="region of interest" description="Linker" evidence="1">
    <location>
        <begin position="128"/>
        <end position="177"/>
    </location>
</feature>
<feature type="region of interest" description="Fe-S binding site A" evidence="1">
    <location>
        <begin position="185"/>
        <end position="201"/>
    </location>
</feature>
<feature type="region of interest" description="Fe-S binding site B" evidence="1">
    <location>
        <begin position="244"/>
        <end position="258"/>
    </location>
</feature>
<feature type="short sequence motif" description="Cx2C motif 1" evidence="1">
    <location>
        <begin position="244"/>
        <end position="247"/>
    </location>
</feature>
<feature type="short sequence motif" description="Cx2C motif 2" evidence="1">
    <location>
        <begin position="255"/>
        <end position="258"/>
    </location>
</feature>
<feature type="binding site" evidence="1">
    <location>
        <position position="185"/>
    </location>
    <ligand>
        <name>[2Fe-2S] cluster</name>
        <dbReference type="ChEBI" id="CHEBI:190135"/>
    </ligand>
</feature>
<feature type="binding site" evidence="1">
    <location>
        <position position="196"/>
    </location>
    <ligand>
        <name>[2Fe-2S] cluster</name>
        <dbReference type="ChEBI" id="CHEBI:190135"/>
    </ligand>
</feature>
<feature type="binding site" evidence="1">
    <location>
        <position position="199"/>
    </location>
    <ligand>
        <name>[2Fe-2S] cluster</name>
        <dbReference type="ChEBI" id="CHEBI:190135"/>
    </ligand>
</feature>
<feature type="binding site" evidence="1">
    <location>
        <position position="201"/>
    </location>
    <ligand>
        <name>[2Fe-2S] cluster</name>
        <dbReference type="ChEBI" id="CHEBI:190135"/>
    </ligand>
</feature>
<feature type="binding site" evidence="1">
    <location>
        <position position="244"/>
    </location>
    <ligand>
        <name>[4Fe-4S] cluster</name>
        <dbReference type="ChEBI" id="CHEBI:49883"/>
    </ligand>
</feature>
<feature type="binding site" evidence="1">
    <location>
        <position position="247"/>
    </location>
    <ligand>
        <name>[4Fe-4S] cluster</name>
        <dbReference type="ChEBI" id="CHEBI:49883"/>
    </ligand>
</feature>
<feature type="binding site" evidence="1">
    <location>
        <position position="255"/>
    </location>
    <ligand>
        <name>[4Fe-4S] cluster</name>
        <dbReference type="ChEBI" id="CHEBI:49883"/>
    </ligand>
</feature>
<feature type="binding site" evidence="1">
    <location>
        <position position="258"/>
    </location>
    <ligand>
        <name>[4Fe-4S] cluster</name>
        <dbReference type="ChEBI" id="CHEBI:49883"/>
    </ligand>
</feature>